<proteinExistence type="evidence at transcript level"/>
<dbReference type="EC" id="3.3.2.10" evidence="2"/>
<dbReference type="EMBL" id="AK132483">
    <property type="protein sequence ID" value="BAE21193.1"/>
    <property type="status" value="ALT_INIT"/>
    <property type="molecule type" value="mRNA"/>
</dbReference>
<dbReference type="RefSeq" id="NP_001028335.1">
    <property type="nucleotide sequence ID" value="NM_001033163.3"/>
</dbReference>
<dbReference type="SMR" id="Q3V1F8"/>
<dbReference type="BioGRID" id="215041">
    <property type="interactions" value="1"/>
</dbReference>
<dbReference type="FunCoup" id="Q3V1F8">
    <property type="interactions" value="12"/>
</dbReference>
<dbReference type="STRING" id="10090.ENSMUSP00000085013"/>
<dbReference type="ESTHER" id="mouse-ephx3">
    <property type="family name" value="Epoxide_hydrolase"/>
</dbReference>
<dbReference type="iPTMnet" id="Q3V1F8"/>
<dbReference type="PhosphoSitePlus" id="Q3V1F8"/>
<dbReference type="PaxDb" id="10090-ENSMUSP00000085013"/>
<dbReference type="ProteomicsDB" id="275631"/>
<dbReference type="GeneID" id="71932"/>
<dbReference type="KEGG" id="mmu:71932"/>
<dbReference type="AGR" id="MGI:1919182"/>
<dbReference type="CTD" id="79852"/>
<dbReference type="MGI" id="MGI:1919182">
    <property type="gene designation" value="Ephx3"/>
</dbReference>
<dbReference type="eggNOG" id="KOG4178">
    <property type="taxonomic scope" value="Eukaryota"/>
</dbReference>
<dbReference type="InParanoid" id="Q3V1F8"/>
<dbReference type="OrthoDB" id="408373at2759"/>
<dbReference type="PhylomeDB" id="Q3V1F8"/>
<dbReference type="TreeFam" id="TF314403"/>
<dbReference type="BRENDA" id="3.3.2.10">
    <property type="organism ID" value="3474"/>
</dbReference>
<dbReference type="BioGRID-ORCS" id="71932">
    <property type="hits" value="1 hit in 78 CRISPR screens"/>
</dbReference>
<dbReference type="PRO" id="PR:Q3V1F8"/>
<dbReference type="Proteomes" id="UP000000589">
    <property type="component" value="Unplaced"/>
</dbReference>
<dbReference type="RNAct" id="Q3V1F8">
    <property type="molecule type" value="protein"/>
</dbReference>
<dbReference type="GO" id="GO:0005783">
    <property type="term" value="C:endoplasmic reticulum"/>
    <property type="evidence" value="ECO:0007669"/>
    <property type="project" value="UniProtKB-KW"/>
</dbReference>
<dbReference type="GO" id="GO:0016020">
    <property type="term" value="C:membrane"/>
    <property type="evidence" value="ECO:0007669"/>
    <property type="project" value="UniProtKB-KW"/>
</dbReference>
<dbReference type="GO" id="GO:0004301">
    <property type="term" value="F:epoxide hydrolase activity"/>
    <property type="evidence" value="ECO:0007669"/>
    <property type="project" value="UniProtKB-EC"/>
</dbReference>
<dbReference type="GO" id="GO:0006629">
    <property type="term" value="P:lipid metabolic process"/>
    <property type="evidence" value="ECO:0007669"/>
    <property type="project" value="UniProtKB-KW"/>
</dbReference>
<dbReference type="FunFam" id="3.40.50.1820:FF:000161">
    <property type="entry name" value="Epoxide hydrolase"/>
    <property type="match status" value="1"/>
</dbReference>
<dbReference type="Gene3D" id="3.40.50.1820">
    <property type="entry name" value="alpha/beta hydrolase"/>
    <property type="match status" value="1"/>
</dbReference>
<dbReference type="InterPro" id="IPR000073">
    <property type="entry name" value="AB_hydrolase_1"/>
</dbReference>
<dbReference type="InterPro" id="IPR029058">
    <property type="entry name" value="AB_hydrolase_fold"/>
</dbReference>
<dbReference type="InterPro" id="IPR000639">
    <property type="entry name" value="Epox_hydrolase-like"/>
</dbReference>
<dbReference type="PANTHER" id="PTHR43329">
    <property type="entry name" value="EPOXIDE HYDROLASE"/>
    <property type="match status" value="1"/>
</dbReference>
<dbReference type="Pfam" id="PF12697">
    <property type="entry name" value="Abhydrolase_6"/>
    <property type="match status" value="1"/>
</dbReference>
<dbReference type="PRINTS" id="PR00412">
    <property type="entry name" value="EPOXHYDRLASE"/>
</dbReference>
<dbReference type="SUPFAM" id="SSF53474">
    <property type="entry name" value="alpha/beta-Hydrolases"/>
    <property type="match status" value="1"/>
</dbReference>
<evidence type="ECO:0000250" key="1">
    <source>
        <dbReference type="UniProtKB" id="P34913"/>
    </source>
</evidence>
<evidence type="ECO:0000250" key="2">
    <source>
        <dbReference type="UniProtKB" id="Q9H6B9"/>
    </source>
</evidence>
<evidence type="ECO:0000255" key="3"/>
<evidence type="ECO:0000269" key="4">
    <source>
    </source>
</evidence>
<evidence type="ECO:0000269" key="5">
    <source>
    </source>
</evidence>
<evidence type="ECO:0000303" key="6">
    <source>
    </source>
</evidence>
<evidence type="ECO:0000305" key="7"/>
<accession>Q3V1F8</accession>
<sequence length="367" mass="41853">MPEFVVTALLAPSRLSLKLLRALVMSLVYLAALVAAFVYSCIALTHVMCRPRRGCCGRQRLSPPECLRDPTLGEHCFLTLRVSVPPVKSSGLRLHYVSAGHGNGPLMLFLHGFPENWFSWRYQLREFQSHFHVVAVDMRGYSPSDAPKEVDCYTIDLLLDDIKDTILGLGYSKCILVSHDWGASLAWEFSIYYPSLVERMVVANGPPMSVIQEYSIHHIGQIFRSNYMFLFQLPWLPEKLLSMSDFQILKDTFTHRKNGIPGLTPSELEAFLYHFSQPGCLTGPINYYRNVFRNFPLEPKKLSTPTLLLWGEKDFAFQQGLVEAIGRHFVPGRLESHILPGSGHWIPQSHPQEMHQYMWAFLQDLLG</sequence>
<feature type="chain" id="PRO_0000264233" description="Epoxide hydrolase 3">
    <location>
        <begin position="1"/>
        <end position="367"/>
    </location>
</feature>
<feature type="transmembrane region" description="Helical" evidence="3">
    <location>
        <begin position="22"/>
        <end position="42"/>
    </location>
</feature>
<feature type="active site" description="Nucleophile" evidence="1">
    <location>
        <position position="180"/>
    </location>
</feature>
<feature type="active site" description="Proton donor" evidence="1">
    <location>
        <position position="288"/>
    </location>
</feature>
<feature type="active site" description="Proton acceptor" evidence="1">
    <location>
        <position position="344"/>
    </location>
</feature>
<comment type="function">
    <text evidence="2">Catalyzes the hydrolysis of epoxide-containing fatty acids. Active in vitro against epoxyeicosatrienoic acids (EETs) including 8,9-EET, 9,10-EET, 11,12-EET and 14,15-EET and leukotoxin.</text>
</comment>
<comment type="catalytic activity">
    <reaction evidence="2">
        <text>an epoxide + H2O = an ethanediol</text>
        <dbReference type="Rhea" id="RHEA:19037"/>
        <dbReference type="ChEBI" id="CHEBI:15377"/>
        <dbReference type="ChEBI" id="CHEBI:32955"/>
        <dbReference type="ChEBI" id="CHEBI:140594"/>
        <dbReference type="EC" id="3.3.2.10"/>
    </reaction>
    <physiologicalReaction direction="left-to-right" evidence="2">
        <dbReference type="Rhea" id="RHEA:19038"/>
    </physiologicalReaction>
</comment>
<comment type="catalytic activity">
    <reaction evidence="2">
        <text>9,10-epoxyoctadecanoate + H2O = 9,10-dihydroxyoctadecanoate</text>
        <dbReference type="Rhea" id="RHEA:45352"/>
        <dbReference type="ChEBI" id="CHEBI:15377"/>
        <dbReference type="ChEBI" id="CHEBI:85195"/>
        <dbReference type="ChEBI" id="CHEBI:85197"/>
    </reaction>
    <physiologicalReaction direction="left-to-right" evidence="2">
        <dbReference type="Rhea" id="RHEA:45353"/>
    </physiologicalReaction>
</comment>
<comment type="catalytic activity">
    <reaction evidence="2">
        <text>9,10-epoxy-(12Z)-octadecenoate + H2O = 9,10-dihydroxy-(12Z)-octadecenoate</text>
        <dbReference type="Rhea" id="RHEA:44032"/>
        <dbReference type="ChEBI" id="CHEBI:15377"/>
        <dbReference type="ChEBI" id="CHEBI:84023"/>
        <dbReference type="ChEBI" id="CHEBI:84027"/>
    </reaction>
    <physiologicalReaction direction="left-to-right" evidence="2">
        <dbReference type="Rhea" id="RHEA:44033"/>
    </physiologicalReaction>
</comment>
<comment type="catalytic activity">
    <reaction evidence="2">
        <text>8,9-epoxy-(5Z,11Z,14Z)-eicosatrienoate + H2O = 8,9-dihydroxy-(5Z,11Z,14Z)-eicosatrienoate</text>
        <dbReference type="Rhea" id="RHEA:44048"/>
        <dbReference type="ChEBI" id="CHEBI:15377"/>
        <dbReference type="ChEBI" id="CHEBI:84025"/>
        <dbReference type="ChEBI" id="CHEBI:84032"/>
    </reaction>
    <physiologicalReaction direction="left-to-right" evidence="2">
        <dbReference type="Rhea" id="RHEA:44049"/>
    </physiologicalReaction>
</comment>
<comment type="catalytic activity">
    <reaction evidence="2">
        <text>11,12-epoxy-(5Z,8Z,14Z)-eicosatrienoate + H2O = 11,12-dihydroxy-(5Z,8Z,14Z)-eicosatrienoate</text>
        <dbReference type="Rhea" id="RHEA:44044"/>
        <dbReference type="ChEBI" id="CHEBI:15377"/>
        <dbReference type="ChEBI" id="CHEBI:76625"/>
        <dbReference type="ChEBI" id="CHEBI:84031"/>
    </reaction>
    <physiologicalReaction direction="left-to-right" evidence="2">
        <dbReference type="Rhea" id="RHEA:44045"/>
    </physiologicalReaction>
</comment>
<comment type="catalytic activity">
    <reaction evidence="2">
        <text>14,15-epoxy-(5Z,8Z,11Z)-eicosatrienoate + H2O = 14,15-dihydroxy-(5Z,8Z,11Z)-eicosatrienoate</text>
        <dbReference type="Rhea" id="RHEA:44040"/>
        <dbReference type="ChEBI" id="CHEBI:15377"/>
        <dbReference type="ChEBI" id="CHEBI:84024"/>
        <dbReference type="ChEBI" id="CHEBI:84029"/>
    </reaction>
    <physiologicalReaction direction="left-to-right" evidence="2">
        <dbReference type="Rhea" id="RHEA:44041"/>
    </physiologicalReaction>
</comment>
<comment type="activity regulation">
    <text evidence="2">Inhibited by 1-(1-acetylpiperidin-4-yl)-3-(4-(trifl uoromethoxy)phenyl)urea (TPAU), 1-cyclohexyl-3-dodecylurea (CDU), 12-(3-adamantan-1-yl-ureido)-dodecanoic acid (AUDA), 1-((3S, 5S, 7S)-adamantan-1-yl)-3-(5-(2-(2-ethoxyethoxy) ethoxy)pentyl)urea (AEPU) and to a lesser extent by 8-(3-((3S, 5S, 7S)-adamantan-1-yl)ureido) octanoic acid (AUOA).</text>
</comment>
<comment type="subcellular location">
    <subcellularLocation>
        <location evidence="2">Microsome membrane</location>
        <topology evidence="3">Single-pass membrane protein</topology>
    </subcellularLocation>
</comment>
<comment type="tissue specificity">
    <text evidence="4">Predominantly expressed in skin, esophagus, lung and tongue and to a lesser extent in pancreas and eye.</text>
</comment>
<comment type="disruption phenotype">
    <text evidence="5">No visible phenotype. Mice are born at the expected Mendelian rate. No defect in the metabolism of epoxygenated fatty acid epoxide.</text>
</comment>
<comment type="similarity">
    <text evidence="7">Belongs to the AB hydrolase superfamily. Epoxide hydrolase family.</text>
</comment>
<comment type="sequence caution" evidence="7">
    <conflict type="erroneous initiation">
        <sequence resource="EMBL-CDS" id="BAE21193"/>
    </conflict>
    <text>Extended N-terminus.</text>
</comment>
<name>EPHX3_MOUSE</name>
<gene>
    <name type="primary">Ephx3</name>
    <name type="synonym">Abhd9</name>
</gene>
<protein>
    <recommendedName>
        <fullName>Epoxide hydrolase 3</fullName>
        <shortName evidence="6">EH3</shortName>
        <ecNumber evidence="2">3.3.2.10</ecNumber>
    </recommendedName>
    <alternativeName>
        <fullName>Abhydrolase domain-containing protein 9</fullName>
    </alternativeName>
</protein>
<reference key="1">
    <citation type="journal article" date="2005" name="Science">
        <title>The transcriptional landscape of the mammalian genome.</title>
        <authorList>
            <person name="Carninci P."/>
            <person name="Kasukawa T."/>
            <person name="Katayama S."/>
            <person name="Gough J."/>
            <person name="Frith M.C."/>
            <person name="Maeda N."/>
            <person name="Oyama R."/>
            <person name="Ravasi T."/>
            <person name="Lenhard B."/>
            <person name="Wells C."/>
            <person name="Kodzius R."/>
            <person name="Shimokawa K."/>
            <person name="Bajic V.B."/>
            <person name="Brenner S.E."/>
            <person name="Batalov S."/>
            <person name="Forrest A.R."/>
            <person name="Zavolan M."/>
            <person name="Davis M.J."/>
            <person name="Wilming L.G."/>
            <person name="Aidinis V."/>
            <person name="Allen J.E."/>
            <person name="Ambesi-Impiombato A."/>
            <person name="Apweiler R."/>
            <person name="Aturaliya R.N."/>
            <person name="Bailey T.L."/>
            <person name="Bansal M."/>
            <person name="Baxter L."/>
            <person name="Beisel K.W."/>
            <person name="Bersano T."/>
            <person name="Bono H."/>
            <person name="Chalk A.M."/>
            <person name="Chiu K.P."/>
            <person name="Choudhary V."/>
            <person name="Christoffels A."/>
            <person name="Clutterbuck D.R."/>
            <person name="Crowe M.L."/>
            <person name="Dalla E."/>
            <person name="Dalrymple B.P."/>
            <person name="de Bono B."/>
            <person name="Della Gatta G."/>
            <person name="di Bernardo D."/>
            <person name="Down T."/>
            <person name="Engstrom P."/>
            <person name="Fagiolini M."/>
            <person name="Faulkner G."/>
            <person name="Fletcher C.F."/>
            <person name="Fukushima T."/>
            <person name="Furuno M."/>
            <person name="Futaki S."/>
            <person name="Gariboldi M."/>
            <person name="Georgii-Hemming P."/>
            <person name="Gingeras T.R."/>
            <person name="Gojobori T."/>
            <person name="Green R.E."/>
            <person name="Gustincich S."/>
            <person name="Harbers M."/>
            <person name="Hayashi Y."/>
            <person name="Hensch T.K."/>
            <person name="Hirokawa N."/>
            <person name="Hill D."/>
            <person name="Huminiecki L."/>
            <person name="Iacono M."/>
            <person name="Ikeo K."/>
            <person name="Iwama A."/>
            <person name="Ishikawa T."/>
            <person name="Jakt M."/>
            <person name="Kanapin A."/>
            <person name="Katoh M."/>
            <person name="Kawasawa Y."/>
            <person name="Kelso J."/>
            <person name="Kitamura H."/>
            <person name="Kitano H."/>
            <person name="Kollias G."/>
            <person name="Krishnan S.P."/>
            <person name="Kruger A."/>
            <person name="Kummerfeld S.K."/>
            <person name="Kurochkin I.V."/>
            <person name="Lareau L.F."/>
            <person name="Lazarevic D."/>
            <person name="Lipovich L."/>
            <person name="Liu J."/>
            <person name="Liuni S."/>
            <person name="McWilliam S."/>
            <person name="Madan Babu M."/>
            <person name="Madera M."/>
            <person name="Marchionni L."/>
            <person name="Matsuda H."/>
            <person name="Matsuzawa S."/>
            <person name="Miki H."/>
            <person name="Mignone F."/>
            <person name="Miyake S."/>
            <person name="Morris K."/>
            <person name="Mottagui-Tabar S."/>
            <person name="Mulder N."/>
            <person name="Nakano N."/>
            <person name="Nakauchi H."/>
            <person name="Ng P."/>
            <person name="Nilsson R."/>
            <person name="Nishiguchi S."/>
            <person name="Nishikawa S."/>
            <person name="Nori F."/>
            <person name="Ohara O."/>
            <person name="Okazaki Y."/>
            <person name="Orlando V."/>
            <person name="Pang K.C."/>
            <person name="Pavan W.J."/>
            <person name="Pavesi G."/>
            <person name="Pesole G."/>
            <person name="Petrovsky N."/>
            <person name="Piazza S."/>
            <person name="Reed J."/>
            <person name="Reid J.F."/>
            <person name="Ring B.Z."/>
            <person name="Ringwald M."/>
            <person name="Rost B."/>
            <person name="Ruan Y."/>
            <person name="Salzberg S.L."/>
            <person name="Sandelin A."/>
            <person name="Schneider C."/>
            <person name="Schoenbach C."/>
            <person name="Sekiguchi K."/>
            <person name="Semple C.A."/>
            <person name="Seno S."/>
            <person name="Sessa L."/>
            <person name="Sheng Y."/>
            <person name="Shibata Y."/>
            <person name="Shimada H."/>
            <person name="Shimada K."/>
            <person name="Silva D."/>
            <person name="Sinclair B."/>
            <person name="Sperling S."/>
            <person name="Stupka E."/>
            <person name="Sugiura K."/>
            <person name="Sultana R."/>
            <person name="Takenaka Y."/>
            <person name="Taki K."/>
            <person name="Tammoja K."/>
            <person name="Tan S.L."/>
            <person name="Tang S."/>
            <person name="Taylor M.S."/>
            <person name="Tegner J."/>
            <person name="Teichmann S.A."/>
            <person name="Ueda H.R."/>
            <person name="van Nimwegen E."/>
            <person name="Verardo R."/>
            <person name="Wei C.L."/>
            <person name="Yagi K."/>
            <person name="Yamanishi H."/>
            <person name="Zabarovsky E."/>
            <person name="Zhu S."/>
            <person name="Zimmer A."/>
            <person name="Hide W."/>
            <person name="Bult C."/>
            <person name="Grimmond S.M."/>
            <person name="Teasdale R.D."/>
            <person name="Liu E.T."/>
            <person name="Brusic V."/>
            <person name="Quackenbush J."/>
            <person name="Wahlestedt C."/>
            <person name="Mattick J.S."/>
            <person name="Hume D.A."/>
            <person name="Kai C."/>
            <person name="Sasaki D."/>
            <person name="Tomaru Y."/>
            <person name="Fukuda S."/>
            <person name="Kanamori-Katayama M."/>
            <person name="Suzuki M."/>
            <person name="Aoki J."/>
            <person name="Arakawa T."/>
            <person name="Iida J."/>
            <person name="Imamura K."/>
            <person name="Itoh M."/>
            <person name="Kato T."/>
            <person name="Kawaji H."/>
            <person name="Kawagashira N."/>
            <person name="Kawashima T."/>
            <person name="Kojima M."/>
            <person name="Kondo S."/>
            <person name="Konno H."/>
            <person name="Nakano K."/>
            <person name="Ninomiya N."/>
            <person name="Nishio T."/>
            <person name="Okada M."/>
            <person name="Plessy C."/>
            <person name="Shibata K."/>
            <person name="Shiraki T."/>
            <person name="Suzuki S."/>
            <person name="Tagami M."/>
            <person name="Waki K."/>
            <person name="Watahiki A."/>
            <person name="Okamura-Oho Y."/>
            <person name="Suzuki H."/>
            <person name="Kawai J."/>
            <person name="Hayashizaki Y."/>
        </authorList>
    </citation>
    <scope>NUCLEOTIDE SEQUENCE [LARGE SCALE MRNA]</scope>
    <source>
        <strain>C57BL/6J</strain>
        <tissue>Skin</tissue>
    </source>
</reference>
<reference key="2">
    <citation type="journal article" date="2012" name="J. Lipid Res.">
        <title>EH3 (ABHD9): the first member of a new epoxide hydrolase family with high activity for fatty acid epoxides.</title>
        <authorList>
            <person name="Decker M."/>
            <person name="Adamska M."/>
            <person name="Cronin A."/>
            <person name="Di Giallonardo F."/>
            <person name="Burgener J."/>
            <person name="Marowsky A."/>
            <person name="Falck J.R."/>
            <person name="Morisseau C."/>
            <person name="Hammock B.D."/>
            <person name="Gruzdev A."/>
            <person name="Zeldin D.C."/>
            <person name="Arand M."/>
        </authorList>
    </citation>
    <scope>TISSUE SPECIFICITY</scope>
</reference>
<reference key="3">
    <citation type="journal article" date="2017" name="PLoS ONE">
        <title>Generation and characterization of epoxide hydrolase 3 (EPHX3)-deficient mice.</title>
        <authorList>
            <person name="Hoopes S.L."/>
            <person name="Gruzdev A."/>
            <person name="Edin M.L."/>
            <person name="Graves J.P."/>
            <person name="Bradbury J.A."/>
            <person name="Flake G.P."/>
            <person name="Lih F.B."/>
            <person name="DeGraff L.M."/>
            <person name="Zeldin D.C."/>
        </authorList>
    </citation>
    <scope>DISRUPTION PHENOTYPE</scope>
</reference>
<keyword id="KW-0256">Endoplasmic reticulum</keyword>
<keyword id="KW-0378">Hydrolase</keyword>
<keyword id="KW-0443">Lipid metabolism</keyword>
<keyword id="KW-0472">Membrane</keyword>
<keyword id="KW-0492">Microsome</keyword>
<keyword id="KW-1185">Reference proteome</keyword>
<keyword id="KW-0812">Transmembrane</keyword>
<keyword id="KW-1133">Transmembrane helix</keyword>
<organism>
    <name type="scientific">Mus musculus</name>
    <name type="common">Mouse</name>
    <dbReference type="NCBI Taxonomy" id="10090"/>
    <lineage>
        <taxon>Eukaryota</taxon>
        <taxon>Metazoa</taxon>
        <taxon>Chordata</taxon>
        <taxon>Craniata</taxon>
        <taxon>Vertebrata</taxon>
        <taxon>Euteleostomi</taxon>
        <taxon>Mammalia</taxon>
        <taxon>Eutheria</taxon>
        <taxon>Euarchontoglires</taxon>
        <taxon>Glires</taxon>
        <taxon>Rodentia</taxon>
        <taxon>Myomorpha</taxon>
        <taxon>Muroidea</taxon>
        <taxon>Muridae</taxon>
        <taxon>Murinae</taxon>
        <taxon>Mus</taxon>
        <taxon>Mus</taxon>
    </lineage>
</organism>